<keyword id="KW-0963">Cytoplasm</keyword>
<keyword id="KW-0342">GTP-binding</keyword>
<keyword id="KW-0436">Ligase</keyword>
<keyword id="KW-0460">Magnesium</keyword>
<keyword id="KW-0479">Metal-binding</keyword>
<keyword id="KW-0547">Nucleotide-binding</keyword>
<keyword id="KW-0658">Purine biosynthesis</keyword>
<keyword id="KW-1185">Reference proteome</keyword>
<dbReference type="EC" id="6.3.4.4" evidence="1"/>
<dbReference type="EMBL" id="CP000878">
    <property type="protein sequence ID" value="ABX08438.1"/>
    <property type="molecule type" value="Genomic_DNA"/>
</dbReference>
<dbReference type="RefSeq" id="WP_012195061.1">
    <property type="nucleotide sequence ID" value="NC_009976.1"/>
</dbReference>
<dbReference type="SMR" id="A9BEC8"/>
<dbReference type="STRING" id="93059.P9211_05071"/>
<dbReference type="KEGG" id="pmj:P9211_05071"/>
<dbReference type="eggNOG" id="COG0104">
    <property type="taxonomic scope" value="Bacteria"/>
</dbReference>
<dbReference type="HOGENOM" id="CLU_029848_0_0_3"/>
<dbReference type="OrthoDB" id="9807553at2"/>
<dbReference type="UniPathway" id="UPA00075">
    <property type="reaction ID" value="UER00335"/>
</dbReference>
<dbReference type="Proteomes" id="UP000000788">
    <property type="component" value="Chromosome"/>
</dbReference>
<dbReference type="GO" id="GO:0005737">
    <property type="term" value="C:cytoplasm"/>
    <property type="evidence" value="ECO:0007669"/>
    <property type="project" value="UniProtKB-SubCell"/>
</dbReference>
<dbReference type="GO" id="GO:0004019">
    <property type="term" value="F:adenylosuccinate synthase activity"/>
    <property type="evidence" value="ECO:0007669"/>
    <property type="project" value="UniProtKB-UniRule"/>
</dbReference>
<dbReference type="GO" id="GO:0005525">
    <property type="term" value="F:GTP binding"/>
    <property type="evidence" value="ECO:0007669"/>
    <property type="project" value="UniProtKB-UniRule"/>
</dbReference>
<dbReference type="GO" id="GO:0000287">
    <property type="term" value="F:magnesium ion binding"/>
    <property type="evidence" value="ECO:0007669"/>
    <property type="project" value="UniProtKB-UniRule"/>
</dbReference>
<dbReference type="GO" id="GO:0044208">
    <property type="term" value="P:'de novo' AMP biosynthetic process"/>
    <property type="evidence" value="ECO:0007669"/>
    <property type="project" value="UniProtKB-UniRule"/>
</dbReference>
<dbReference type="GO" id="GO:0046040">
    <property type="term" value="P:IMP metabolic process"/>
    <property type="evidence" value="ECO:0007669"/>
    <property type="project" value="TreeGrafter"/>
</dbReference>
<dbReference type="CDD" id="cd03108">
    <property type="entry name" value="AdSS"/>
    <property type="match status" value="1"/>
</dbReference>
<dbReference type="FunFam" id="1.10.300.10:FF:000001">
    <property type="entry name" value="Adenylosuccinate synthetase"/>
    <property type="match status" value="1"/>
</dbReference>
<dbReference type="FunFam" id="3.90.170.10:FF:000001">
    <property type="entry name" value="Adenylosuccinate synthetase"/>
    <property type="match status" value="1"/>
</dbReference>
<dbReference type="Gene3D" id="3.40.440.10">
    <property type="entry name" value="Adenylosuccinate Synthetase, subunit A, domain 1"/>
    <property type="match status" value="1"/>
</dbReference>
<dbReference type="Gene3D" id="1.10.300.10">
    <property type="entry name" value="Adenylosuccinate Synthetase, subunit A, domain 2"/>
    <property type="match status" value="1"/>
</dbReference>
<dbReference type="Gene3D" id="3.90.170.10">
    <property type="entry name" value="Adenylosuccinate Synthetase, subunit A, domain 3"/>
    <property type="match status" value="1"/>
</dbReference>
<dbReference type="HAMAP" id="MF_00011">
    <property type="entry name" value="Adenylosucc_synth"/>
    <property type="match status" value="1"/>
</dbReference>
<dbReference type="InterPro" id="IPR018220">
    <property type="entry name" value="Adenylosuccin_syn_GTP-bd"/>
</dbReference>
<dbReference type="InterPro" id="IPR033128">
    <property type="entry name" value="Adenylosuccin_syn_Lys_AS"/>
</dbReference>
<dbReference type="InterPro" id="IPR042109">
    <property type="entry name" value="Adenylosuccinate_synth_dom1"/>
</dbReference>
<dbReference type="InterPro" id="IPR042110">
    <property type="entry name" value="Adenylosuccinate_synth_dom2"/>
</dbReference>
<dbReference type="InterPro" id="IPR042111">
    <property type="entry name" value="Adenylosuccinate_synth_dom3"/>
</dbReference>
<dbReference type="InterPro" id="IPR001114">
    <property type="entry name" value="Adenylosuccinate_synthetase"/>
</dbReference>
<dbReference type="InterPro" id="IPR027417">
    <property type="entry name" value="P-loop_NTPase"/>
</dbReference>
<dbReference type="NCBIfam" id="NF002223">
    <property type="entry name" value="PRK01117.1"/>
    <property type="match status" value="1"/>
</dbReference>
<dbReference type="NCBIfam" id="TIGR00184">
    <property type="entry name" value="purA"/>
    <property type="match status" value="1"/>
</dbReference>
<dbReference type="PANTHER" id="PTHR11846">
    <property type="entry name" value="ADENYLOSUCCINATE SYNTHETASE"/>
    <property type="match status" value="1"/>
</dbReference>
<dbReference type="PANTHER" id="PTHR11846:SF0">
    <property type="entry name" value="ADENYLOSUCCINATE SYNTHETASE"/>
    <property type="match status" value="1"/>
</dbReference>
<dbReference type="Pfam" id="PF00709">
    <property type="entry name" value="Adenylsucc_synt"/>
    <property type="match status" value="1"/>
</dbReference>
<dbReference type="SMART" id="SM00788">
    <property type="entry name" value="Adenylsucc_synt"/>
    <property type="match status" value="1"/>
</dbReference>
<dbReference type="SUPFAM" id="SSF52540">
    <property type="entry name" value="P-loop containing nucleoside triphosphate hydrolases"/>
    <property type="match status" value="1"/>
</dbReference>
<dbReference type="PROSITE" id="PS01266">
    <property type="entry name" value="ADENYLOSUCCIN_SYN_1"/>
    <property type="match status" value="1"/>
</dbReference>
<dbReference type="PROSITE" id="PS00513">
    <property type="entry name" value="ADENYLOSUCCIN_SYN_2"/>
    <property type="match status" value="1"/>
</dbReference>
<proteinExistence type="inferred from homology"/>
<organism>
    <name type="scientific">Prochlorococcus marinus (strain MIT 9211)</name>
    <dbReference type="NCBI Taxonomy" id="93059"/>
    <lineage>
        <taxon>Bacteria</taxon>
        <taxon>Bacillati</taxon>
        <taxon>Cyanobacteriota</taxon>
        <taxon>Cyanophyceae</taxon>
        <taxon>Synechococcales</taxon>
        <taxon>Prochlorococcaceae</taxon>
        <taxon>Prochlorococcus</taxon>
    </lineage>
</organism>
<protein>
    <recommendedName>
        <fullName evidence="1">Adenylosuccinate synthetase</fullName>
        <shortName evidence="1">AMPSase</shortName>
        <shortName evidence="1">AdSS</shortName>
        <ecNumber evidence="1">6.3.4.4</ecNumber>
    </recommendedName>
    <alternativeName>
        <fullName evidence="1">IMP--aspartate ligase</fullName>
    </alternativeName>
</protein>
<comment type="function">
    <text evidence="1">Plays an important role in the de novo pathway of purine nucleotide biosynthesis. Catalyzes the first committed step in the biosynthesis of AMP from IMP.</text>
</comment>
<comment type="catalytic activity">
    <reaction evidence="1">
        <text>IMP + L-aspartate + GTP = N(6)-(1,2-dicarboxyethyl)-AMP + GDP + phosphate + 2 H(+)</text>
        <dbReference type="Rhea" id="RHEA:15753"/>
        <dbReference type="ChEBI" id="CHEBI:15378"/>
        <dbReference type="ChEBI" id="CHEBI:29991"/>
        <dbReference type="ChEBI" id="CHEBI:37565"/>
        <dbReference type="ChEBI" id="CHEBI:43474"/>
        <dbReference type="ChEBI" id="CHEBI:57567"/>
        <dbReference type="ChEBI" id="CHEBI:58053"/>
        <dbReference type="ChEBI" id="CHEBI:58189"/>
        <dbReference type="EC" id="6.3.4.4"/>
    </reaction>
</comment>
<comment type="cofactor">
    <cofactor evidence="1">
        <name>Mg(2+)</name>
        <dbReference type="ChEBI" id="CHEBI:18420"/>
    </cofactor>
    <text evidence="1">Binds 1 Mg(2+) ion per subunit.</text>
</comment>
<comment type="pathway">
    <text evidence="1">Purine metabolism; AMP biosynthesis via de novo pathway; AMP from IMP: step 1/2.</text>
</comment>
<comment type="subunit">
    <text evidence="1">Homodimer.</text>
</comment>
<comment type="subcellular location">
    <subcellularLocation>
        <location evidence="1">Cytoplasm</location>
    </subcellularLocation>
</comment>
<comment type="similarity">
    <text evidence="1">Belongs to the adenylosuccinate synthetase family.</text>
</comment>
<gene>
    <name evidence="1" type="primary">purA</name>
    <name type="ordered locus">P9211_05071</name>
</gene>
<evidence type="ECO:0000255" key="1">
    <source>
        <dbReference type="HAMAP-Rule" id="MF_00011"/>
    </source>
</evidence>
<sequence length="437" mass="48077">MANVVVIGAQWGDEGKGKITDLLSRSADVVVRYQGGVNAGHTIVVEDKVLKLHLIPSGILYPETICLIGSGTVVDPKVMLKEIEMLIENDIDISGLQLASTAHVTMPYHRLIDQAMEKRRGEQKIGTTGRGIGPTYADKAQRNGIRVIDLLDEQKLRERLRIPLAEKNNVLQKIYKELPLDQEKVIEEYLEYGDRLRPHVVDCSRAIHQAARNRKNILFEGAQGTLLDLDHGTYPFVTSSNPVSGGACIGAGVGPTLIDRVIGVAKAYTTRVGEGPFPTELEGSLNDQLCDRGGEYGTTTGRRRRCGWFDGVIGKYAVEVNGLDCIAITKLDVLDELEEIKVCVAYQLDGQKIEYFPSSAEDFSRCKPIFKSLPGWKSSTAECKRLEDLPPSAMAYLRFLAELMEVPIAIVSLGASRDQTIVVEDPIHGPKRALLNI</sequence>
<feature type="chain" id="PRO_1000089324" description="Adenylosuccinate synthetase">
    <location>
        <begin position="1"/>
        <end position="437"/>
    </location>
</feature>
<feature type="active site" description="Proton acceptor" evidence="1">
    <location>
        <position position="13"/>
    </location>
</feature>
<feature type="active site" description="Proton donor" evidence="1">
    <location>
        <position position="41"/>
    </location>
</feature>
<feature type="binding site" evidence="1">
    <location>
        <begin position="12"/>
        <end position="18"/>
    </location>
    <ligand>
        <name>GTP</name>
        <dbReference type="ChEBI" id="CHEBI:37565"/>
    </ligand>
</feature>
<feature type="binding site" description="in other chain" evidence="1">
    <location>
        <begin position="13"/>
        <end position="16"/>
    </location>
    <ligand>
        <name>IMP</name>
        <dbReference type="ChEBI" id="CHEBI:58053"/>
        <note>ligand shared between dimeric partners</note>
    </ligand>
</feature>
<feature type="binding site" evidence="1">
    <location>
        <position position="13"/>
    </location>
    <ligand>
        <name>Mg(2+)</name>
        <dbReference type="ChEBI" id="CHEBI:18420"/>
    </ligand>
</feature>
<feature type="binding site" description="in other chain" evidence="1">
    <location>
        <begin position="38"/>
        <end position="41"/>
    </location>
    <ligand>
        <name>IMP</name>
        <dbReference type="ChEBI" id="CHEBI:58053"/>
        <note>ligand shared between dimeric partners</note>
    </ligand>
</feature>
<feature type="binding site" evidence="1">
    <location>
        <begin position="40"/>
        <end position="42"/>
    </location>
    <ligand>
        <name>GTP</name>
        <dbReference type="ChEBI" id="CHEBI:37565"/>
    </ligand>
</feature>
<feature type="binding site" evidence="1">
    <location>
        <position position="40"/>
    </location>
    <ligand>
        <name>Mg(2+)</name>
        <dbReference type="ChEBI" id="CHEBI:18420"/>
    </ligand>
</feature>
<feature type="binding site" description="in other chain" evidence="1">
    <location>
        <position position="128"/>
    </location>
    <ligand>
        <name>IMP</name>
        <dbReference type="ChEBI" id="CHEBI:58053"/>
        <note>ligand shared between dimeric partners</note>
    </ligand>
</feature>
<feature type="binding site" evidence="1">
    <location>
        <position position="142"/>
    </location>
    <ligand>
        <name>IMP</name>
        <dbReference type="ChEBI" id="CHEBI:58053"/>
        <note>ligand shared between dimeric partners</note>
    </ligand>
</feature>
<feature type="binding site" description="in other chain" evidence="1">
    <location>
        <position position="223"/>
    </location>
    <ligand>
        <name>IMP</name>
        <dbReference type="ChEBI" id="CHEBI:58053"/>
        <note>ligand shared between dimeric partners</note>
    </ligand>
</feature>
<feature type="binding site" description="in other chain" evidence="1">
    <location>
        <position position="238"/>
    </location>
    <ligand>
        <name>IMP</name>
        <dbReference type="ChEBI" id="CHEBI:58053"/>
        <note>ligand shared between dimeric partners</note>
    </ligand>
</feature>
<feature type="binding site" evidence="1">
    <location>
        <begin position="298"/>
        <end position="304"/>
    </location>
    <ligand>
        <name>substrate</name>
    </ligand>
</feature>
<feature type="binding site" description="in other chain" evidence="1">
    <location>
        <position position="302"/>
    </location>
    <ligand>
        <name>IMP</name>
        <dbReference type="ChEBI" id="CHEBI:58053"/>
        <note>ligand shared between dimeric partners</note>
    </ligand>
</feature>
<feature type="binding site" evidence="1">
    <location>
        <position position="304"/>
    </location>
    <ligand>
        <name>GTP</name>
        <dbReference type="ChEBI" id="CHEBI:37565"/>
    </ligand>
</feature>
<feature type="binding site" evidence="1">
    <location>
        <begin position="330"/>
        <end position="332"/>
    </location>
    <ligand>
        <name>GTP</name>
        <dbReference type="ChEBI" id="CHEBI:37565"/>
    </ligand>
</feature>
<feature type="binding site" evidence="1">
    <location>
        <begin position="412"/>
        <end position="414"/>
    </location>
    <ligand>
        <name>GTP</name>
        <dbReference type="ChEBI" id="CHEBI:37565"/>
    </ligand>
</feature>
<accession>A9BEC8</accession>
<reference key="1">
    <citation type="journal article" date="2007" name="PLoS Genet.">
        <title>Patterns and implications of gene gain and loss in the evolution of Prochlorococcus.</title>
        <authorList>
            <person name="Kettler G.C."/>
            <person name="Martiny A.C."/>
            <person name="Huang K."/>
            <person name="Zucker J."/>
            <person name="Coleman M.L."/>
            <person name="Rodrigue S."/>
            <person name="Chen F."/>
            <person name="Lapidus A."/>
            <person name="Ferriera S."/>
            <person name="Johnson J."/>
            <person name="Steglich C."/>
            <person name="Church G.M."/>
            <person name="Richardson P."/>
            <person name="Chisholm S.W."/>
        </authorList>
    </citation>
    <scope>NUCLEOTIDE SEQUENCE [LARGE SCALE GENOMIC DNA]</scope>
    <source>
        <strain>MIT 9211</strain>
    </source>
</reference>
<name>PURA_PROM4</name>